<sequence>MARITVEDCLNQIPNRFKLTLAATYRARELAQGHAPRLDSKDKPTVTALREIASGLTGLEMLRKVPT</sequence>
<keyword id="KW-0240">DNA-directed RNA polymerase</keyword>
<keyword id="KW-0548">Nucleotidyltransferase</keyword>
<keyword id="KW-1185">Reference proteome</keyword>
<keyword id="KW-0804">Transcription</keyword>
<keyword id="KW-0808">Transferase</keyword>
<protein>
    <recommendedName>
        <fullName evidence="1">DNA-directed RNA polymerase subunit omega</fullName>
        <shortName evidence="1">RNAP omega subunit</shortName>
        <ecNumber evidence="1">2.7.7.6</ecNumber>
    </recommendedName>
    <alternativeName>
        <fullName evidence="1">RNA polymerase omega subunit</fullName>
    </alternativeName>
    <alternativeName>
        <fullName evidence="1">Transcriptase subunit omega</fullName>
    </alternativeName>
</protein>
<evidence type="ECO:0000255" key="1">
    <source>
        <dbReference type="HAMAP-Rule" id="MF_00366"/>
    </source>
</evidence>
<proteinExistence type="inferred from homology"/>
<accession>Q2L066</accession>
<dbReference type="EC" id="2.7.7.6" evidence="1"/>
<dbReference type="EMBL" id="AM167904">
    <property type="protein sequence ID" value="CAJ49565.1"/>
    <property type="molecule type" value="Genomic_DNA"/>
</dbReference>
<dbReference type="RefSeq" id="WP_003811126.1">
    <property type="nucleotide sequence ID" value="NC_010645.1"/>
</dbReference>
<dbReference type="SMR" id="Q2L066"/>
<dbReference type="STRING" id="360910.BAV1956"/>
<dbReference type="GeneID" id="93204790"/>
<dbReference type="KEGG" id="bav:BAV1956"/>
<dbReference type="eggNOG" id="COG1758">
    <property type="taxonomic scope" value="Bacteria"/>
</dbReference>
<dbReference type="HOGENOM" id="CLU_125406_5_1_4"/>
<dbReference type="OrthoDB" id="9796300at2"/>
<dbReference type="Proteomes" id="UP000001977">
    <property type="component" value="Chromosome"/>
</dbReference>
<dbReference type="GO" id="GO:0000428">
    <property type="term" value="C:DNA-directed RNA polymerase complex"/>
    <property type="evidence" value="ECO:0007669"/>
    <property type="project" value="UniProtKB-KW"/>
</dbReference>
<dbReference type="GO" id="GO:0003677">
    <property type="term" value="F:DNA binding"/>
    <property type="evidence" value="ECO:0007669"/>
    <property type="project" value="UniProtKB-UniRule"/>
</dbReference>
<dbReference type="GO" id="GO:0003899">
    <property type="term" value="F:DNA-directed RNA polymerase activity"/>
    <property type="evidence" value="ECO:0007669"/>
    <property type="project" value="UniProtKB-UniRule"/>
</dbReference>
<dbReference type="GO" id="GO:0006351">
    <property type="term" value="P:DNA-templated transcription"/>
    <property type="evidence" value="ECO:0007669"/>
    <property type="project" value="UniProtKB-UniRule"/>
</dbReference>
<dbReference type="Gene3D" id="3.90.940.10">
    <property type="match status" value="1"/>
</dbReference>
<dbReference type="HAMAP" id="MF_00366">
    <property type="entry name" value="RNApol_bact_RpoZ"/>
    <property type="match status" value="1"/>
</dbReference>
<dbReference type="InterPro" id="IPR003716">
    <property type="entry name" value="DNA-dir_RNA_pol_omega"/>
</dbReference>
<dbReference type="InterPro" id="IPR006110">
    <property type="entry name" value="Pol_omega/Rpo6/RPB6"/>
</dbReference>
<dbReference type="InterPro" id="IPR036161">
    <property type="entry name" value="RPB6/omega-like_sf"/>
</dbReference>
<dbReference type="NCBIfam" id="TIGR00690">
    <property type="entry name" value="rpoZ"/>
    <property type="match status" value="1"/>
</dbReference>
<dbReference type="PANTHER" id="PTHR34476">
    <property type="entry name" value="DNA-DIRECTED RNA POLYMERASE SUBUNIT OMEGA"/>
    <property type="match status" value="1"/>
</dbReference>
<dbReference type="PANTHER" id="PTHR34476:SF1">
    <property type="entry name" value="DNA-DIRECTED RNA POLYMERASE SUBUNIT OMEGA"/>
    <property type="match status" value="1"/>
</dbReference>
<dbReference type="Pfam" id="PF01192">
    <property type="entry name" value="RNA_pol_Rpb6"/>
    <property type="match status" value="1"/>
</dbReference>
<dbReference type="SMART" id="SM01409">
    <property type="entry name" value="RNA_pol_Rpb6"/>
    <property type="match status" value="1"/>
</dbReference>
<dbReference type="SUPFAM" id="SSF63562">
    <property type="entry name" value="RPB6/omega subunit-like"/>
    <property type="match status" value="1"/>
</dbReference>
<organism>
    <name type="scientific">Bordetella avium (strain 197N)</name>
    <dbReference type="NCBI Taxonomy" id="360910"/>
    <lineage>
        <taxon>Bacteria</taxon>
        <taxon>Pseudomonadati</taxon>
        <taxon>Pseudomonadota</taxon>
        <taxon>Betaproteobacteria</taxon>
        <taxon>Burkholderiales</taxon>
        <taxon>Alcaligenaceae</taxon>
        <taxon>Bordetella</taxon>
    </lineage>
</organism>
<reference key="1">
    <citation type="journal article" date="2006" name="J. Bacteriol.">
        <title>Comparison of the genome sequence of the poultry pathogen Bordetella avium with those of B. bronchiseptica, B. pertussis, and B. parapertussis reveals extensive diversity in surface structures associated with host interaction.</title>
        <authorList>
            <person name="Sebaihia M."/>
            <person name="Preston A."/>
            <person name="Maskell D.J."/>
            <person name="Kuzmiak H."/>
            <person name="Connell T.D."/>
            <person name="King N.D."/>
            <person name="Orndorff P.E."/>
            <person name="Miyamoto D.M."/>
            <person name="Thomson N.R."/>
            <person name="Harris D."/>
            <person name="Goble A."/>
            <person name="Lord A."/>
            <person name="Murphy L."/>
            <person name="Quail M.A."/>
            <person name="Rutter S."/>
            <person name="Squares R."/>
            <person name="Squares S."/>
            <person name="Woodward J."/>
            <person name="Parkhill J."/>
            <person name="Temple L.M."/>
        </authorList>
    </citation>
    <scope>NUCLEOTIDE SEQUENCE [LARGE SCALE GENOMIC DNA]</scope>
    <source>
        <strain>197N</strain>
    </source>
</reference>
<name>RPOZ_BORA1</name>
<feature type="chain" id="PRO_0000237439" description="DNA-directed RNA polymerase subunit omega">
    <location>
        <begin position="1"/>
        <end position="67"/>
    </location>
</feature>
<comment type="function">
    <text evidence="1">Promotes RNA polymerase assembly. Latches the N- and C-terminal regions of the beta' subunit thereby facilitating its interaction with the beta and alpha subunits.</text>
</comment>
<comment type="catalytic activity">
    <reaction evidence="1">
        <text>RNA(n) + a ribonucleoside 5'-triphosphate = RNA(n+1) + diphosphate</text>
        <dbReference type="Rhea" id="RHEA:21248"/>
        <dbReference type="Rhea" id="RHEA-COMP:14527"/>
        <dbReference type="Rhea" id="RHEA-COMP:17342"/>
        <dbReference type="ChEBI" id="CHEBI:33019"/>
        <dbReference type="ChEBI" id="CHEBI:61557"/>
        <dbReference type="ChEBI" id="CHEBI:140395"/>
        <dbReference type="EC" id="2.7.7.6"/>
    </reaction>
</comment>
<comment type="subunit">
    <text evidence="1">The RNAP catalytic core consists of 2 alpha, 1 beta, 1 beta' and 1 omega subunit. When a sigma factor is associated with the core the holoenzyme is formed, which can initiate transcription.</text>
</comment>
<comment type="similarity">
    <text evidence="1">Belongs to the RNA polymerase subunit omega family.</text>
</comment>
<gene>
    <name evidence="1" type="primary">rpoZ</name>
    <name type="ordered locus">BAV1956</name>
</gene>